<reference key="1">
    <citation type="journal article" date="2000" name="Nature">
        <title>The genome sequence of the plant pathogen Xylella fastidiosa.</title>
        <authorList>
            <person name="Simpson A.J.G."/>
            <person name="Reinach F.C."/>
            <person name="Arruda P."/>
            <person name="Abreu F.A."/>
            <person name="Acencio M."/>
            <person name="Alvarenga R."/>
            <person name="Alves L.M.C."/>
            <person name="Araya J.E."/>
            <person name="Baia G.S."/>
            <person name="Baptista C.S."/>
            <person name="Barros M.H."/>
            <person name="Bonaccorsi E.D."/>
            <person name="Bordin S."/>
            <person name="Bove J.M."/>
            <person name="Briones M.R.S."/>
            <person name="Bueno M.R.P."/>
            <person name="Camargo A.A."/>
            <person name="Camargo L.E.A."/>
            <person name="Carraro D.M."/>
            <person name="Carrer H."/>
            <person name="Colauto N.B."/>
            <person name="Colombo C."/>
            <person name="Costa F.F."/>
            <person name="Costa M.C.R."/>
            <person name="Costa-Neto C.M."/>
            <person name="Coutinho L.L."/>
            <person name="Cristofani M."/>
            <person name="Dias-Neto E."/>
            <person name="Docena C."/>
            <person name="El-Dorry H."/>
            <person name="Facincani A.P."/>
            <person name="Ferreira A.J.S."/>
            <person name="Ferreira V.C.A."/>
            <person name="Ferro J.A."/>
            <person name="Fraga J.S."/>
            <person name="Franca S.C."/>
            <person name="Franco M.C."/>
            <person name="Frohme M."/>
            <person name="Furlan L.R."/>
            <person name="Garnier M."/>
            <person name="Goldman G.H."/>
            <person name="Goldman M.H.S."/>
            <person name="Gomes S.L."/>
            <person name="Gruber A."/>
            <person name="Ho P.L."/>
            <person name="Hoheisel J.D."/>
            <person name="Junqueira M.L."/>
            <person name="Kemper E.L."/>
            <person name="Kitajima J.P."/>
            <person name="Krieger J.E."/>
            <person name="Kuramae E.E."/>
            <person name="Laigret F."/>
            <person name="Lambais M.R."/>
            <person name="Leite L.C.C."/>
            <person name="Lemos E.G.M."/>
            <person name="Lemos M.V.F."/>
            <person name="Lopes S.A."/>
            <person name="Lopes C.R."/>
            <person name="Machado J.A."/>
            <person name="Machado M.A."/>
            <person name="Madeira A.M.B.N."/>
            <person name="Madeira H.M.F."/>
            <person name="Marino C.L."/>
            <person name="Marques M.V."/>
            <person name="Martins E.A.L."/>
            <person name="Martins E.M.F."/>
            <person name="Matsukuma A.Y."/>
            <person name="Menck C.F.M."/>
            <person name="Miracca E.C."/>
            <person name="Miyaki C.Y."/>
            <person name="Monteiro-Vitorello C.B."/>
            <person name="Moon D.H."/>
            <person name="Nagai M.A."/>
            <person name="Nascimento A.L.T.O."/>
            <person name="Netto L.E.S."/>
            <person name="Nhani A. Jr."/>
            <person name="Nobrega F.G."/>
            <person name="Nunes L.R."/>
            <person name="Oliveira M.A."/>
            <person name="de Oliveira M.C."/>
            <person name="de Oliveira R.C."/>
            <person name="Palmieri D.A."/>
            <person name="Paris A."/>
            <person name="Peixoto B.R."/>
            <person name="Pereira G.A.G."/>
            <person name="Pereira H.A. Jr."/>
            <person name="Pesquero J.B."/>
            <person name="Quaggio R.B."/>
            <person name="Roberto P.G."/>
            <person name="Rodrigues V."/>
            <person name="de Rosa A.J.M."/>
            <person name="de Rosa V.E. Jr."/>
            <person name="de Sa R.G."/>
            <person name="Santelli R.V."/>
            <person name="Sawasaki H.E."/>
            <person name="da Silva A.C.R."/>
            <person name="da Silva A.M."/>
            <person name="da Silva F.R."/>
            <person name="Silva W.A. Jr."/>
            <person name="da Silveira J.F."/>
            <person name="Silvestri M.L.Z."/>
            <person name="Siqueira W.J."/>
            <person name="de Souza A.A."/>
            <person name="de Souza A.P."/>
            <person name="Terenzi M.F."/>
            <person name="Truffi D."/>
            <person name="Tsai S.M."/>
            <person name="Tsuhako M.H."/>
            <person name="Vallada H."/>
            <person name="Van Sluys M.A."/>
            <person name="Verjovski-Almeida S."/>
            <person name="Vettore A.L."/>
            <person name="Zago M.A."/>
            <person name="Zatz M."/>
            <person name="Meidanis J."/>
            <person name="Setubal J.C."/>
        </authorList>
    </citation>
    <scope>NUCLEOTIDE SEQUENCE [LARGE SCALE GENOMIC DNA]</scope>
    <source>
        <strain>9a5c</strain>
    </source>
</reference>
<proteinExistence type="inferred from homology"/>
<gene>
    <name type="primary">rpmH</name>
    <name type="ordered locus">XF_2782</name>
</gene>
<sequence>MATKRTYQPSNLKRKRDHGFRARMSTADGRKILARRRAKGRKRLSA</sequence>
<name>RL34_XYLFA</name>
<comment type="similarity">
    <text evidence="2">Belongs to the bacterial ribosomal protein bL34 family.</text>
</comment>
<feature type="chain" id="PRO_0000187509" description="Large ribosomal subunit protein bL34">
    <location>
        <begin position="1"/>
        <end position="46"/>
    </location>
</feature>
<feature type="region of interest" description="Disordered" evidence="1">
    <location>
        <begin position="1"/>
        <end position="46"/>
    </location>
</feature>
<feature type="compositionally biased region" description="Polar residues" evidence="1">
    <location>
        <begin position="1"/>
        <end position="11"/>
    </location>
</feature>
<feature type="compositionally biased region" description="Basic residues" evidence="1">
    <location>
        <begin position="32"/>
        <end position="46"/>
    </location>
</feature>
<accession>P66263</accession>
<accession>Q9P9T9</accession>
<organism>
    <name type="scientific">Xylella fastidiosa (strain 9a5c)</name>
    <dbReference type="NCBI Taxonomy" id="160492"/>
    <lineage>
        <taxon>Bacteria</taxon>
        <taxon>Pseudomonadati</taxon>
        <taxon>Pseudomonadota</taxon>
        <taxon>Gammaproteobacteria</taxon>
        <taxon>Lysobacterales</taxon>
        <taxon>Lysobacteraceae</taxon>
        <taxon>Xylella</taxon>
    </lineage>
</organism>
<evidence type="ECO:0000256" key="1">
    <source>
        <dbReference type="SAM" id="MobiDB-lite"/>
    </source>
</evidence>
<evidence type="ECO:0000305" key="2"/>
<dbReference type="EMBL" id="AE003849">
    <property type="protein sequence ID" value="AAF85567.1"/>
    <property type="molecule type" value="Genomic_DNA"/>
</dbReference>
<dbReference type="PIR" id="B82517">
    <property type="entry name" value="B82517"/>
</dbReference>
<dbReference type="RefSeq" id="WP_004085093.1">
    <property type="nucleotide sequence ID" value="NC_002488.3"/>
</dbReference>
<dbReference type="SMR" id="P66263"/>
<dbReference type="STRING" id="160492.XF_2782"/>
<dbReference type="GeneID" id="93905998"/>
<dbReference type="KEGG" id="xfa:XF_2782"/>
<dbReference type="eggNOG" id="COG0230">
    <property type="taxonomic scope" value="Bacteria"/>
</dbReference>
<dbReference type="HOGENOM" id="CLU_129938_2_0_6"/>
<dbReference type="Proteomes" id="UP000000812">
    <property type="component" value="Chromosome"/>
</dbReference>
<dbReference type="GO" id="GO:1990904">
    <property type="term" value="C:ribonucleoprotein complex"/>
    <property type="evidence" value="ECO:0007669"/>
    <property type="project" value="UniProtKB-KW"/>
</dbReference>
<dbReference type="GO" id="GO:0005840">
    <property type="term" value="C:ribosome"/>
    <property type="evidence" value="ECO:0007669"/>
    <property type="project" value="UniProtKB-KW"/>
</dbReference>
<dbReference type="GO" id="GO:0003735">
    <property type="term" value="F:structural constituent of ribosome"/>
    <property type="evidence" value="ECO:0007669"/>
    <property type="project" value="InterPro"/>
</dbReference>
<dbReference type="GO" id="GO:0006412">
    <property type="term" value="P:translation"/>
    <property type="evidence" value="ECO:0007669"/>
    <property type="project" value="UniProtKB-UniRule"/>
</dbReference>
<dbReference type="FunFam" id="1.10.287.3980:FF:000001">
    <property type="entry name" value="Mitochondrial ribosomal protein L34"/>
    <property type="match status" value="1"/>
</dbReference>
<dbReference type="Gene3D" id="1.10.287.3980">
    <property type="match status" value="1"/>
</dbReference>
<dbReference type="HAMAP" id="MF_00391">
    <property type="entry name" value="Ribosomal_bL34"/>
    <property type="match status" value="1"/>
</dbReference>
<dbReference type="InterPro" id="IPR000271">
    <property type="entry name" value="Ribosomal_bL34"/>
</dbReference>
<dbReference type="InterPro" id="IPR020939">
    <property type="entry name" value="Ribosomal_bL34_CS"/>
</dbReference>
<dbReference type="NCBIfam" id="TIGR01030">
    <property type="entry name" value="rpmH_bact"/>
    <property type="match status" value="1"/>
</dbReference>
<dbReference type="PANTHER" id="PTHR14503:SF4">
    <property type="entry name" value="LARGE RIBOSOMAL SUBUNIT PROTEIN BL34M"/>
    <property type="match status" value="1"/>
</dbReference>
<dbReference type="PANTHER" id="PTHR14503">
    <property type="entry name" value="MITOCHONDRIAL RIBOSOMAL PROTEIN 34 FAMILY MEMBER"/>
    <property type="match status" value="1"/>
</dbReference>
<dbReference type="Pfam" id="PF00468">
    <property type="entry name" value="Ribosomal_L34"/>
    <property type="match status" value="1"/>
</dbReference>
<dbReference type="PROSITE" id="PS00784">
    <property type="entry name" value="RIBOSOMAL_L34"/>
    <property type="match status" value="1"/>
</dbReference>
<keyword id="KW-0687">Ribonucleoprotein</keyword>
<keyword id="KW-0689">Ribosomal protein</keyword>
<protein>
    <recommendedName>
        <fullName evidence="2">Large ribosomal subunit protein bL34</fullName>
    </recommendedName>
    <alternativeName>
        <fullName>50S ribosomal protein L34</fullName>
    </alternativeName>
</protein>